<evidence type="ECO:0000255" key="1">
    <source>
        <dbReference type="HAMAP-Rule" id="MF_00020"/>
    </source>
</evidence>
<gene>
    <name evidence="1" type="primary">ackA</name>
    <name type="ordered locus">Cbei_1165</name>
</gene>
<sequence>MKVLVINCGSSSLKYQLIDMSNEESLAQGLVERIGITGSILTQKVEGKDKYVVETPLKDHQDAIELVLKCLVDENHGVISSMDEISAVGHRVVHGGEKYATSVVINEEVIKALDEFTKLAPLHNPPNIIGINACKALMPKTPMVAVFDTAFHQTMPEKAFMYALPYELYTEDHVRRYGFHGTSHKYVAGEMAKLMNKDISDLKIVTCHIGNGVSITAVDGGKSVDTTMGFTPLDGIIMGSRSGSIDPAIVTYLVKEKGYSIDEVNDILNKKSGVLGISGIGTDFRDIRSAVENDNDPRALLTMDIFGYQVKKQIGAYAAVMGGVDAIVFTAGIGEHAPEIRSRALTNMEFLGIEVDLEKNESHNIGDGMEISKETSKVKVVVIPTNEELMIAKETLELVK</sequence>
<name>ACKA_CLOB8</name>
<keyword id="KW-0067">ATP-binding</keyword>
<keyword id="KW-0963">Cytoplasm</keyword>
<keyword id="KW-0418">Kinase</keyword>
<keyword id="KW-0460">Magnesium</keyword>
<keyword id="KW-0479">Metal-binding</keyword>
<keyword id="KW-0547">Nucleotide-binding</keyword>
<keyword id="KW-0808">Transferase</keyword>
<dbReference type="EC" id="2.7.2.1" evidence="1"/>
<dbReference type="EMBL" id="CP000721">
    <property type="protein sequence ID" value="ABR33347.1"/>
    <property type="molecule type" value="Genomic_DNA"/>
</dbReference>
<dbReference type="RefSeq" id="WP_011968504.1">
    <property type="nucleotide sequence ID" value="NC_009617.1"/>
</dbReference>
<dbReference type="SMR" id="A6LSL7"/>
<dbReference type="GeneID" id="66344153"/>
<dbReference type="KEGG" id="cbe:Cbei_1165"/>
<dbReference type="eggNOG" id="COG0282">
    <property type="taxonomic scope" value="Bacteria"/>
</dbReference>
<dbReference type="HOGENOM" id="CLU_020352_0_1_9"/>
<dbReference type="UniPathway" id="UPA00340">
    <property type="reaction ID" value="UER00458"/>
</dbReference>
<dbReference type="Proteomes" id="UP000000565">
    <property type="component" value="Chromosome"/>
</dbReference>
<dbReference type="GO" id="GO:0005737">
    <property type="term" value="C:cytoplasm"/>
    <property type="evidence" value="ECO:0007669"/>
    <property type="project" value="UniProtKB-SubCell"/>
</dbReference>
<dbReference type="GO" id="GO:0008776">
    <property type="term" value="F:acetate kinase activity"/>
    <property type="evidence" value="ECO:0007669"/>
    <property type="project" value="UniProtKB-UniRule"/>
</dbReference>
<dbReference type="GO" id="GO:0005524">
    <property type="term" value="F:ATP binding"/>
    <property type="evidence" value="ECO:0007669"/>
    <property type="project" value="UniProtKB-KW"/>
</dbReference>
<dbReference type="GO" id="GO:0000287">
    <property type="term" value="F:magnesium ion binding"/>
    <property type="evidence" value="ECO:0007669"/>
    <property type="project" value="UniProtKB-UniRule"/>
</dbReference>
<dbReference type="GO" id="GO:0006083">
    <property type="term" value="P:acetate metabolic process"/>
    <property type="evidence" value="ECO:0007669"/>
    <property type="project" value="TreeGrafter"/>
</dbReference>
<dbReference type="GO" id="GO:0006085">
    <property type="term" value="P:acetyl-CoA biosynthetic process"/>
    <property type="evidence" value="ECO:0007669"/>
    <property type="project" value="UniProtKB-UniRule"/>
</dbReference>
<dbReference type="CDD" id="cd24010">
    <property type="entry name" value="ASKHA_NBD_AcK_PK"/>
    <property type="match status" value="1"/>
</dbReference>
<dbReference type="Gene3D" id="3.30.420.40">
    <property type="match status" value="2"/>
</dbReference>
<dbReference type="HAMAP" id="MF_00020">
    <property type="entry name" value="Acetate_kinase"/>
    <property type="match status" value="1"/>
</dbReference>
<dbReference type="InterPro" id="IPR004372">
    <property type="entry name" value="Ac/propionate_kinase"/>
</dbReference>
<dbReference type="InterPro" id="IPR000890">
    <property type="entry name" value="Aliphatic_acid_kin_short-chain"/>
</dbReference>
<dbReference type="InterPro" id="IPR023865">
    <property type="entry name" value="Aliphatic_acid_kinase_CS"/>
</dbReference>
<dbReference type="InterPro" id="IPR043129">
    <property type="entry name" value="ATPase_NBD"/>
</dbReference>
<dbReference type="NCBIfam" id="TIGR00016">
    <property type="entry name" value="ackA"/>
    <property type="match status" value="1"/>
</dbReference>
<dbReference type="PANTHER" id="PTHR21060">
    <property type="entry name" value="ACETATE KINASE"/>
    <property type="match status" value="1"/>
</dbReference>
<dbReference type="PANTHER" id="PTHR21060:SF15">
    <property type="entry name" value="ACETATE KINASE-RELATED"/>
    <property type="match status" value="1"/>
</dbReference>
<dbReference type="Pfam" id="PF00871">
    <property type="entry name" value="Acetate_kinase"/>
    <property type="match status" value="1"/>
</dbReference>
<dbReference type="PIRSF" id="PIRSF000722">
    <property type="entry name" value="Acetate_prop_kin"/>
    <property type="match status" value="1"/>
</dbReference>
<dbReference type="PRINTS" id="PR00471">
    <property type="entry name" value="ACETATEKNASE"/>
</dbReference>
<dbReference type="SUPFAM" id="SSF53067">
    <property type="entry name" value="Actin-like ATPase domain"/>
    <property type="match status" value="2"/>
</dbReference>
<dbReference type="PROSITE" id="PS01075">
    <property type="entry name" value="ACETATE_KINASE_1"/>
    <property type="match status" value="1"/>
</dbReference>
<dbReference type="PROSITE" id="PS01076">
    <property type="entry name" value="ACETATE_KINASE_2"/>
    <property type="match status" value="1"/>
</dbReference>
<feature type="chain" id="PRO_1000074183" description="Acetate kinase">
    <location>
        <begin position="1"/>
        <end position="400"/>
    </location>
</feature>
<feature type="active site" description="Proton donor/acceptor" evidence="1">
    <location>
        <position position="148"/>
    </location>
</feature>
<feature type="binding site" evidence="1">
    <location>
        <position position="7"/>
    </location>
    <ligand>
        <name>Mg(2+)</name>
        <dbReference type="ChEBI" id="CHEBI:18420"/>
    </ligand>
</feature>
<feature type="binding site" evidence="1">
    <location>
        <position position="14"/>
    </location>
    <ligand>
        <name>ATP</name>
        <dbReference type="ChEBI" id="CHEBI:30616"/>
    </ligand>
</feature>
<feature type="binding site" evidence="1">
    <location>
        <position position="91"/>
    </location>
    <ligand>
        <name>substrate</name>
    </ligand>
</feature>
<feature type="binding site" evidence="1">
    <location>
        <begin position="208"/>
        <end position="212"/>
    </location>
    <ligand>
        <name>ATP</name>
        <dbReference type="ChEBI" id="CHEBI:30616"/>
    </ligand>
</feature>
<feature type="binding site" evidence="1">
    <location>
        <begin position="283"/>
        <end position="285"/>
    </location>
    <ligand>
        <name>ATP</name>
        <dbReference type="ChEBI" id="CHEBI:30616"/>
    </ligand>
</feature>
<feature type="binding site" evidence="1">
    <location>
        <begin position="332"/>
        <end position="336"/>
    </location>
    <ligand>
        <name>ATP</name>
        <dbReference type="ChEBI" id="CHEBI:30616"/>
    </ligand>
</feature>
<feature type="binding site" evidence="1">
    <location>
        <position position="387"/>
    </location>
    <ligand>
        <name>Mg(2+)</name>
        <dbReference type="ChEBI" id="CHEBI:18420"/>
    </ligand>
</feature>
<feature type="site" description="Transition state stabilizer" evidence="1">
    <location>
        <position position="180"/>
    </location>
</feature>
<feature type="site" description="Transition state stabilizer" evidence="1">
    <location>
        <position position="241"/>
    </location>
</feature>
<comment type="function">
    <text evidence="1">Catalyzes the formation of acetyl phosphate from acetate and ATP. Can also catalyze the reverse reaction.</text>
</comment>
<comment type="catalytic activity">
    <reaction evidence="1">
        <text>acetate + ATP = acetyl phosphate + ADP</text>
        <dbReference type="Rhea" id="RHEA:11352"/>
        <dbReference type="ChEBI" id="CHEBI:22191"/>
        <dbReference type="ChEBI" id="CHEBI:30089"/>
        <dbReference type="ChEBI" id="CHEBI:30616"/>
        <dbReference type="ChEBI" id="CHEBI:456216"/>
        <dbReference type="EC" id="2.7.2.1"/>
    </reaction>
</comment>
<comment type="cofactor">
    <cofactor evidence="1">
        <name>Mg(2+)</name>
        <dbReference type="ChEBI" id="CHEBI:18420"/>
    </cofactor>
    <cofactor evidence="1">
        <name>Mn(2+)</name>
        <dbReference type="ChEBI" id="CHEBI:29035"/>
    </cofactor>
    <text evidence="1">Mg(2+). Can also accept Mn(2+).</text>
</comment>
<comment type="pathway">
    <text evidence="1">Metabolic intermediate biosynthesis; acetyl-CoA biosynthesis; acetyl-CoA from acetate: step 1/2.</text>
</comment>
<comment type="subunit">
    <text evidence="1">Homodimer.</text>
</comment>
<comment type="subcellular location">
    <subcellularLocation>
        <location evidence="1">Cytoplasm</location>
    </subcellularLocation>
</comment>
<comment type="similarity">
    <text evidence="1">Belongs to the acetokinase family.</text>
</comment>
<reference key="1">
    <citation type="submission" date="2007-06" db="EMBL/GenBank/DDBJ databases">
        <title>Complete sequence of Clostridium beijerinckii NCIMB 8052.</title>
        <authorList>
            <consortium name="US DOE Joint Genome Institute"/>
            <person name="Copeland A."/>
            <person name="Lucas S."/>
            <person name="Lapidus A."/>
            <person name="Barry K."/>
            <person name="Detter J.C."/>
            <person name="Glavina del Rio T."/>
            <person name="Hammon N."/>
            <person name="Israni S."/>
            <person name="Dalin E."/>
            <person name="Tice H."/>
            <person name="Pitluck S."/>
            <person name="Sims D."/>
            <person name="Brettin T."/>
            <person name="Bruce D."/>
            <person name="Tapia R."/>
            <person name="Brainard J."/>
            <person name="Schmutz J."/>
            <person name="Larimer F."/>
            <person name="Land M."/>
            <person name="Hauser L."/>
            <person name="Kyrpides N."/>
            <person name="Mikhailova N."/>
            <person name="Bennet G."/>
            <person name="Cann I."/>
            <person name="Chen J.-S."/>
            <person name="Contreras A.L."/>
            <person name="Jones D."/>
            <person name="Kashket E."/>
            <person name="Mitchell W."/>
            <person name="Stoddard S."/>
            <person name="Schwarz W."/>
            <person name="Qureshi N."/>
            <person name="Young M."/>
            <person name="Shi Z."/>
            <person name="Ezeji T."/>
            <person name="White B."/>
            <person name="Blaschek H."/>
            <person name="Richardson P."/>
        </authorList>
    </citation>
    <scope>NUCLEOTIDE SEQUENCE [LARGE SCALE GENOMIC DNA]</scope>
    <source>
        <strain>ATCC 51743 / NCIMB 8052</strain>
    </source>
</reference>
<protein>
    <recommendedName>
        <fullName evidence="1">Acetate kinase</fullName>
        <ecNumber evidence="1">2.7.2.1</ecNumber>
    </recommendedName>
    <alternativeName>
        <fullName evidence="1">Acetokinase</fullName>
    </alternativeName>
</protein>
<proteinExistence type="inferred from homology"/>
<organism>
    <name type="scientific">Clostridium beijerinckii (strain ATCC 51743 / NCIMB 8052)</name>
    <name type="common">Clostridium acetobutylicum</name>
    <dbReference type="NCBI Taxonomy" id="290402"/>
    <lineage>
        <taxon>Bacteria</taxon>
        <taxon>Bacillati</taxon>
        <taxon>Bacillota</taxon>
        <taxon>Clostridia</taxon>
        <taxon>Eubacteriales</taxon>
        <taxon>Clostridiaceae</taxon>
        <taxon>Clostridium</taxon>
    </lineage>
</organism>
<accession>A6LSL7</accession>